<protein>
    <recommendedName>
        <fullName>Chalcone synthase 3</fullName>
        <ecNumber>2.3.1.74</ecNumber>
    </recommendedName>
    <alternativeName>
        <fullName>Naringenin-chalcone synthase 3</fullName>
    </alternativeName>
</protein>
<comment type="function">
    <text>The primary product of this enzyme is 4,2',4',6'-tetrahydroxychalcone (also termed naringenin-chalcone or chalcone) which can under specific conditions spontaneously isomerize into naringenin.</text>
</comment>
<comment type="catalytic activity">
    <reaction evidence="1">
        <text>(E)-4-coumaroyl-CoA + 3 malonyl-CoA + 3 H(+) = 2',4,4',6'-tetrahydroxychalcone + 3 CO2 + 4 CoA</text>
        <dbReference type="Rhea" id="RHEA:11128"/>
        <dbReference type="ChEBI" id="CHEBI:15378"/>
        <dbReference type="ChEBI" id="CHEBI:15413"/>
        <dbReference type="ChEBI" id="CHEBI:16526"/>
        <dbReference type="ChEBI" id="CHEBI:57287"/>
        <dbReference type="ChEBI" id="CHEBI:57384"/>
        <dbReference type="ChEBI" id="CHEBI:85008"/>
        <dbReference type="EC" id="2.3.1.74"/>
    </reaction>
</comment>
<comment type="pathway">
    <text>Secondary metabolite biosynthesis; flavonoid biosynthesis.</text>
</comment>
<comment type="similarity">
    <text evidence="2">Belongs to the thiolase-like superfamily. Chalcone/stilbene synthases family.</text>
</comment>
<accession>Q9SBL6</accession>
<keyword id="KW-0012">Acyltransferase</keyword>
<keyword id="KW-0284">Flavonoid biosynthesis</keyword>
<keyword id="KW-0808">Transferase</keyword>
<gene>
    <name type="primary">CHS3</name>
</gene>
<reference key="1">
    <citation type="submission" date="1999-05" db="EMBL/GenBank/DDBJ databases">
        <title>Molecular cloning of chalcone synthase genes from sorghum.</title>
        <authorList>
            <person name="Lo S.-C.C."/>
            <person name="Nicholson R.L."/>
        </authorList>
    </citation>
    <scope>NUCLEOTIDE SEQUENCE [GENOMIC DNA]</scope>
    <source>
        <strain>cv. BTx623</strain>
    </source>
</reference>
<feature type="chain" id="PRO_0000216057" description="Chalcone synthase 3">
    <location>
        <begin position="1"/>
        <end position="401"/>
    </location>
</feature>
<feature type="active site" evidence="1">
    <location>
        <position position="168"/>
    </location>
</feature>
<organism>
    <name type="scientific">Sorghum bicolor</name>
    <name type="common">Sorghum</name>
    <name type="synonym">Sorghum vulgare</name>
    <dbReference type="NCBI Taxonomy" id="4558"/>
    <lineage>
        <taxon>Eukaryota</taxon>
        <taxon>Viridiplantae</taxon>
        <taxon>Streptophyta</taxon>
        <taxon>Embryophyta</taxon>
        <taxon>Tracheophyta</taxon>
        <taxon>Spermatophyta</taxon>
        <taxon>Magnoliopsida</taxon>
        <taxon>Liliopsida</taxon>
        <taxon>Poales</taxon>
        <taxon>Poaceae</taxon>
        <taxon>PACMAD clade</taxon>
        <taxon>Panicoideae</taxon>
        <taxon>Andropogonodae</taxon>
        <taxon>Andropogoneae</taxon>
        <taxon>Sorghinae</taxon>
        <taxon>Sorghum</taxon>
    </lineage>
</organism>
<proteinExistence type="inferred from homology"/>
<name>CHS3_SORBI</name>
<dbReference type="EC" id="2.3.1.74"/>
<dbReference type="EMBL" id="AF152550">
    <property type="protein sequence ID" value="AAD41875.1"/>
    <property type="molecule type" value="Genomic_DNA"/>
</dbReference>
<dbReference type="RefSeq" id="XP_002450875.1">
    <property type="nucleotide sequence ID" value="XM_002450830.1"/>
</dbReference>
<dbReference type="SMR" id="Q9SBL6"/>
<dbReference type="EnsemblPlants" id="EES09863">
    <property type="protein sequence ID" value="EES09863"/>
    <property type="gene ID" value="SORBI_3005G137100"/>
</dbReference>
<dbReference type="GeneID" id="8064818"/>
<dbReference type="Gramene" id="EES09863">
    <property type="protein sequence ID" value="EES09863"/>
    <property type="gene ID" value="SORBI_3005G137100"/>
</dbReference>
<dbReference type="KEGG" id="sbi:8064818"/>
<dbReference type="eggNOG" id="ENOG502QRSY">
    <property type="taxonomic scope" value="Eukaryota"/>
</dbReference>
<dbReference type="HOGENOM" id="CLU_034992_2_0_1"/>
<dbReference type="OMA" id="IHPIKVC"/>
<dbReference type="OrthoDB" id="1529441at2759"/>
<dbReference type="UniPathway" id="UPA00154"/>
<dbReference type="ExpressionAtlas" id="Q9SBL6">
    <property type="expression patterns" value="baseline and differential"/>
</dbReference>
<dbReference type="GO" id="GO:0016210">
    <property type="term" value="F:naringenin-chalcone synthase activity"/>
    <property type="evidence" value="ECO:0007669"/>
    <property type="project" value="UniProtKB-EC"/>
</dbReference>
<dbReference type="GO" id="GO:0009813">
    <property type="term" value="P:flavonoid biosynthetic process"/>
    <property type="evidence" value="ECO:0007669"/>
    <property type="project" value="UniProtKB-UniPathway"/>
</dbReference>
<dbReference type="CDD" id="cd00831">
    <property type="entry name" value="CHS_like"/>
    <property type="match status" value="1"/>
</dbReference>
<dbReference type="FunFam" id="3.40.47.10:FF:000014">
    <property type="entry name" value="Chalcone synthase 1"/>
    <property type="match status" value="1"/>
</dbReference>
<dbReference type="FunFam" id="3.40.47.10:FF:000025">
    <property type="entry name" value="Chalcone synthase 2"/>
    <property type="match status" value="1"/>
</dbReference>
<dbReference type="Gene3D" id="3.40.47.10">
    <property type="match status" value="2"/>
</dbReference>
<dbReference type="InterPro" id="IPR012328">
    <property type="entry name" value="Chalcone/stilbene_synt_C"/>
</dbReference>
<dbReference type="InterPro" id="IPR001099">
    <property type="entry name" value="Chalcone/stilbene_synt_N"/>
</dbReference>
<dbReference type="InterPro" id="IPR018088">
    <property type="entry name" value="Chalcone/stilbene_synthase_AS"/>
</dbReference>
<dbReference type="InterPro" id="IPR011141">
    <property type="entry name" value="Polyketide_synthase_type-III"/>
</dbReference>
<dbReference type="InterPro" id="IPR016039">
    <property type="entry name" value="Thiolase-like"/>
</dbReference>
<dbReference type="PANTHER" id="PTHR11877:SF14">
    <property type="entry name" value="CHALCONE SYNTHASE"/>
    <property type="match status" value="1"/>
</dbReference>
<dbReference type="PANTHER" id="PTHR11877">
    <property type="entry name" value="HYDROXYMETHYLGLUTARYL-COA SYNTHASE"/>
    <property type="match status" value="1"/>
</dbReference>
<dbReference type="Pfam" id="PF02797">
    <property type="entry name" value="Chal_sti_synt_C"/>
    <property type="match status" value="1"/>
</dbReference>
<dbReference type="Pfam" id="PF00195">
    <property type="entry name" value="Chal_sti_synt_N"/>
    <property type="match status" value="1"/>
</dbReference>
<dbReference type="PIRSF" id="PIRSF000451">
    <property type="entry name" value="PKS_III"/>
    <property type="match status" value="1"/>
</dbReference>
<dbReference type="SUPFAM" id="SSF53901">
    <property type="entry name" value="Thiolase-like"/>
    <property type="match status" value="2"/>
</dbReference>
<dbReference type="PROSITE" id="PS00441">
    <property type="entry name" value="CHALCONE_SYNTH"/>
    <property type="match status" value="1"/>
</dbReference>
<sequence>MAAATVTVEEVRKAQRATGPATVLAIGTATPANCVHQADYPDYYFRITKSEHMTDLKEKFKRMCDKSQIRKRYMHLTEEYLAENPNMCAYMAPSLDARQDIVVVEVPKLGKAAAQKAIKEWGQPKSKITHLVFCTTSGVDMPGADYQLTKMLGLRPSVNRLMMYQQGCFAGGTVLRVAKDLAENNRGARVLVVCSEITAVTFRGPSESHLDSMVGQALFGDGAAAVIVGADPDERVERPLFQLVSASQTILPDSEGAIDGHLREVGLTFHLLKDVPGLISKNIERSLEEAFKPLGITDYNSIFWVAHPGGPAILDQVEAKVGLEKERLRATRHVLSEYGNMSSACVLFILDEMRKRSAEDGQATTGEGFDWGVLFGFGPGLTVETVVLHSVPITTGAAITA</sequence>
<evidence type="ECO:0000255" key="1">
    <source>
        <dbReference type="PROSITE-ProRule" id="PRU10023"/>
    </source>
</evidence>
<evidence type="ECO:0000305" key="2"/>